<comment type="function">
    <text evidence="1">Methylates the carboxyl group of the C-terminal leucine residue of protein phosphatase 2A catalytic subunits to form alpha-leucine ester residues.</text>
</comment>
<comment type="catalytic activity">
    <reaction>
        <text>[phosphatase 2A protein]-C-terminal L-leucine + S-adenosyl-L-methionine = [phosphatase 2A protein]-C-terminal L-leucine methyl ester + S-adenosyl-L-homocysteine</text>
        <dbReference type="Rhea" id="RHEA:48544"/>
        <dbReference type="Rhea" id="RHEA-COMP:12134"/>
        <dbReference type="Rhea" id="RHEA-COMP:12135"/>
        <dbReference type="ChEBI" id="CHEBI:57856"/>
        <dbReference type="ChEBI" id="CHEBI:59789"/>
        <dbReference type="ChEBI" id="CHEBI:90516"/>
        <dbReference type="ChEBI" id="CHEBI:90517"/>
        <dbReference type="EC" id="2.1.1.233"/>
    </reaction>
</comment>
<comment type="similarity">
    <text evidence="2">Belongs to the methyltransferase superfamily. LCMT family.</text>
</comment>
<evidence type="ECO:0000250" key="1"/>
<evidence type="ECO:0000305" key="2"/>
<evidence type="ECO:0000312" key="3">
    <source>
        <dbReference type="WormBase" id="CBG18087"/>
    </source>
</evidence>
<accession>Q60YU0</accession>
<accession>A8XT04</accession>
<dbReference type="EC" id="2.1.1.233"/>
<dbReference type="EMBL" id="HE600963">
    <property type="protein sequence ID" value="CAP35607.1"/>
    <property type="molecule type" value="Genomic_DNA"/>
</dbReference>
<dbReference type="RefSeq" id="XP_002642139.1">
    <property type="nucleotide sequence ID" value="XM_002642093.1"/>
</dbReference>
<dbReference type="SMR" id="Q60YU0"/>
<dbReference type="FunCoup" id="Q60YU0">
    <property type="interactions" value="2824"/>
</dbReference>
<dbReference type="STRING" id="6238.Q60YU0"/>
<dbReference type="EnsemblMetazoa" id="CBG18087.1">
    <property type="protein sequence ID" value="CBG18087.1"/>
    <property type="gene ID" value="WBGene00037577"/>
</dbReference>
<dbReference type="GeneID" id="8584134"/>
<dbReference type="KEGG" id="cbr:CBG_18087"/>
<dbReference type="CTD" id="8584134"/>
<dbReference type="WormBase" id="CBG18087">
    <property type="protein sequence ID" value="CBP04345"/>
    <property type="gene ID" value="WBGene00037577"/>
    <property type="gene designation" value="Cbr-lcmt-1"/>
</dbReference>
<dbReference type="eggNOG" id="KOG2918">
    <property type="taxonomic scope" value="Eukaryota"/>
</dbReference>
<dbReference type="HOGENOM" id="CLU_031312_0_0_1"/>
<dbReference type="InParanoid" id="Q60YU0"/>
<dbReference type="OMA" id="IIYEPIR"/>
<dbReference type="OrthoDB" id="203237at2759"/>
<dbReference type="Proteomes" id="UP000008549">
    <property type="component" value="Unassembled WGS sequence"/>
</dbReference>
<dbReference type="GO" id="GO:0005829">
    <property type="term" value="C:cytosol"/>
    <property type="evidence" value="ECO:0000318"/>
    <property type="project" value="GO_Central"/>
</dbReference>
<dbReference type="GO" id="GO:0018423">
    <property type="term" value="F:protein C-terminal leucine carboxyl O-methyltransferase activity"/>
    <property type="evidence" value="ECO:0000318"/>
    <property type="project" value="GO_Central"/>
</dbReference>
<dbReference type="GO" id="GO:0032259">
    <property type="term" value="P:methylation"/>
    <property type="evidence" value="ECO:0007669"/>
    <property type="project" value="UniProtKB-KW"/>
</dbReference>
<dbReference type="GO" id="GO:0090266">
    <property type="term" value="P:regulation of mitotic cell cycle spindle assembly checkpoint"/>
    <property type="evidence" value="ECO:0000318"/>
    <property type="project" value="GO_Central"/>
</dbReference>
<dbReference type="FunFam" id="3.40.50.150:FF:000092">
    <property type="entry name" value="Leucine carboxyl methyltransferase 1"/>
    <property type="match status" value="1"/>
</dbReference>
<dbReference type="Gene3D" id="3.40.50.150">
    <property type="entry name" value="Vaccinia Virus protein VP39"/>
    <property type="match status" value="1"/>
</dbReference>
<dbReference type="InterPro" id="IPR016651">
    <property type="entry name" value="LCMT1"/>
</dbReference>
<dbReference type="InterPro" id="IPR007213">
    <property type="entry name" value="Ppm1/Ppm2/Tcmp"/>
</dbReference>
<dbReference type="InterPro" id="IPR029063">
    <property type="entry name" value="SAM-dependent_MTases_sf"/>
</dbReference>
<dbReference type="PANTHER" id="PTHR13600">
    <property type="entry name" value="LEUCINE CARBOXYL METHYLTRANSFERASE"/>
    <property type="match status" value="1"/>
</dbReference>
<dbReference type="PANTHER" id="PTHR13600:SF33">
    <property type="entry name" value="LEUCINE CARBOXYL METHYLTRANSFERASE 1"/>
    <property type="match status" value="1"/>
</dbReference>
<dbReference type="Pfam" id="PF04072">
    <property type="entry name" value="LCM"/>
    <property type="match status" value="1"/>
</dbReference>
<dbReference type="PIRSF" id="PIRSF016305">
    <property type="entry name" value="LCM_mtfrase"/>
    <property type="match status" value="1"/>
</dbReference>
<dbReference type="SUPFAM" id="SSF53335">
    <property type="entry name" value="S-adenosyl-L-methionine-dependent methyltransferases"/>
    <property type="match status" value="1"/>
</dbReference>
<feature type="chain" id="PRO_0000226152" description="Probable leucine carboxyl methyltransferase 1">
    <location>
        <begin position="1"/>
        <end position="331"/>
    </location>
</feature>
<feature type="binding site" evidence="1">
    <location>
        <position position="82"/>
    </location>
    <ligand>
        <name>S-adenosyl-L-methionine</name>
        <dbReference type="ChEBI" id="CHEBI:59789"/>
    </ligand>
</feature>
<feature type="binding site" evidence="1">
    <location>
        <position position="107"/>
    </location>
    <ligand>
        <name>S-adenosyl-L-methionine</name>
        <dbReference type="ChEBI" id="CHEBI:59789"/>
    </ligand>
</feature>
<feature type="binding site" evidence="1">
    <location>
        <position position="131"/>
    </location>
    <ligand>
        <name>S-adenosyl-L-methionine</name>
        <dbReference type="ChEBI" id="CHEBI:59789"/>
    </ligand>
</feature>
<feature type="binding site" evidence="1">
    <location>
        <begin position="179"/>
        <end position="180"/>
    </location>
    <ligand>
        <name>S-adenosyl-L-methionine</name>
        <dbReference type="ChEBI" id="CHEBI:59789"/>
    </ligand>
</feature>
<feature type="binding site" evidence="1">
    <location>
        <position position="206"/>
    </location>
    <ligand>
        <name>S-adenosyl-L-methionine</name>
        <dbReference type="ChEBI" id="CHEBI:59789"/>
    </ligand>
</feature>
<sequence length="331" mass="37629">MDSEAISSDSHVAAAIATRRRSNSVSDDYSVQRTNDDATQCKYFAIQKGYWKDDFIGRFANSSANVAEARRFPEISMGYWARTAAIEKYVRGFLEEFDGNAQVVSFGCGFDTLFWRLVSSDAKLAKYVEVDFSSVTSKKIRHILKPGGSVDLKKSFESEAVVSHHADLHAGNYHLIGADLRQTSELEQKLATCQLDHDIPTIFIAECVLVYMSSNTSSSLLKNLVSQFRHPAFVNYEQFRTSDAFTRVMEQNLGERGIQLHGLEMCESAEKQEERFRNAGFKSVKVMDMNQIFNQFLDQDEVARIRQIEMLDEMELLEQLLAHYCVVFARV</sequence>
<name>LCMT1_CAEBR</name>
<organism>
    <name type="scientific">Caenorhabditis briggsae</name>
    <dbReference type="NCBI Taxonomy" id="6238"/>
    <lineage>
        <taxon>Eukaryota</taxon>
        <taxon>Metazoa</taxon>
        <taxon>Ecdysozoa</taxon>
        <taxon>Nematoda</taxon>
        <taxon>Chromadorea</taxon>
        <taxon>Rhabditida</taxon>
        <taxon>Rhabditina</taxon>
        <taxon>Rhabditomorpha</taxon>
        <taxon>Rhabditoidea</taxon>
        <taxon>Rhabditidae</taxon>
        <taxon>Peloderinae</taxon>
        <taxon>Caenorhabditis</taxon>
    </lineage>
</organism>
<proteinExistence type="inferred from homology"/>
<gene>
    <name evidence="3" type="primary">lcmt-1</name>
    <name evidence="3" type="ORF">CBG18087</name>
</gene>
<reference key="1">
    <citation type="journal article" date="2003" name="PLoS Biol.">
        <title>The genome sequence of Caenorhabditis briggsae: a platform for comparative genomics.</title>
        <authorList>
            <person name="Stein L.D."/>
            <person name="Bao Z."/>
            <person name="Blasiar D."/>
            <person name="Blumenthal T."/>
            <person name="Brent M.R."/>
            <person name="Chen N."/>
            <person name="Chinwalla A."/>
            <person name="Clarke L."/>
            <person name="Clee C."/>
            <person name="Coghlan A."/>
            <person name="Coulson A."/>
            <person name="D'Eustachio P."/>
            <person name="Fitch D.H.A."/>
            <person name="Fulton L.A."/>
            <person name="Fulton R.E."/>
            <person name="Griffiths-Jones S."/>
            <person name="Harris T.W."/>
            <person name="Hillier L.W."/>
            <person name="Kamath R."/>
            <person name="Kuwabara P.E."/>
            <person name="Mardis E.R."/>
            <person name="Marra M.A."/>
            <person name="Miner T.L."/>
            <person name="Minx P."/>
            <person name="Mullikin J.C."/>
            <person name="Plumb R.W."/>
            <person name="Rogers J."/>
            <person name="Schein J.E."/>
            <person name="Sohrmann M."/>
            <person name="Spieth J."/>
            <person name="Stajich J.E."/>
            <person name="Wei C."/>
            <person name="Willey D."/>
            <person name="Wilson R.K."/>
            <person name="Durbin R.M."/>
            <person name="Waterston R.H."/>
        </authorList>
    </citation>
    <scope>NUCLEOTIDE SEQUENCE [LARGE SCALE GENOMIC DNA]</scope>
    <source>
        <strain>AF16</strain>
    </source>
</reference>
<protein>
    <recommendedName>
        <fullName>Probable leucine carboxyl methyltransferase 1</fullName>
        <ecNumber>2.1.1.233</ecNumber>
    </recommendedName>
    <alternativeName>
        <fullName>[Phosphatase 2A protein]-leucine-carboxy methyltransferase 1</fullName>
    </alternativeName>
</protein>
<keyword id="KW-0489">Methyltransferase</keyword>
<keyword id="KW-1185">Reference proteome</keyword>
<keyword id="KW-0949">S-adenosyl-L-methionine</keyword>
<keyword id="KW-0808">Transferase</keyword>